<proteinExistence type="inferred from homology"/>
<protein>
    <recommendedName>
        <fullName>Trk system potassium uptake protein TrkA</fullName>
        <shortName>K(+)-uptake protein TrkA</shortName>
    </recommendedName>
</protein>
<reference key="1">
    <citation type="journal article" date="1994" name="Biochim. Biophys. Acta">
        <title>Cloning and sequencing of a K+ transport gene (trk A) from the marine bacterium Vibrio alginolyticus.</title>
        <authorList>
            <person name="Nakamura T."/>
            <person name="Matsuba Y."/>
            <person name="Yamamuro N."/>
            <person name="Booth I.R."/>
            <person name="Unemoto T."/>
        </authorList>
    </citation>
    <scope>NUCLEOTIDE SEQUENCE [GENOMIC DNA]</scope>
    <source>
        <strain>138-2</strain>
    </source>
</reference>
<reference key="2">
    <citation type="journal article" date="1998" name="Microbiology">
        <title>Cloning of the trkAH gene cluster and characterization of the Trk K+-uptake system of Vibrio alginolyticus.</title>
        <authorList>
            <person name="Nakamura T."/>
            <person name="Yamamuro N."/>
            <person name="Stumpe S."/>
            <person name="Unemoto T."/>
            <person name="Bakker E.P."/>
        </authorList>
    </citation>
    <scope>NUCLEOTIDE SEQUENCE [GENOMIC DNA]</scope>
    <scope>FUNCTION</scope>
    <scope>SUBCELLULAR LOCATION</scope>
    <source>
        <strain>138-2</strain>
    </source>
</reference>
<accession>P39448</accession>
<comment type="function">
    <text evidence="5">Part of a potassium transport system.</text>
</comment>
<comment type="subcellular location">
    <subcellularLocation>
        <location evidence="5">Cell inner membrane</location>
        <topology evidence="5">Peripheral membrane protein</topology>
        <orientation evidence="5">Cytoplasmic side</orientation>
    </subcellularLocation>
</comment>
<comment type="domain">
    <text evidence="1">The RCK N-terminal domain binds NAD and possibly other effectors. This is expected to cause a conformation change that regulates potassium transport (By similarity).</text>
</comment>
<keyword id="KW-0997">Cell inner membrane</keyword>
<keyword id="KW-1003">Cell membrane</keyword>
<keyword id="KW-0406">Ion transport</keyword>
<keyword id="KW-0472">Membrane</keyword>
<keyword id="KW-0520">NAD</keyword>
<keyword id="KW-0630">Potassium</keyword>
<keyword id="KW-0633">Potassium transport</keyword>
<keyword id="KW-0677">Repeat</keyword>
<keyword id="KW-0813">Transport</keyword>
<evidence type="ECO:0000250" key="1"/>
<evidence type="ECO:0000255" key="2"/>
<evidence type="ECO:0000255" key="3">
    <source>
        <dbReference type="PROSITE-ProRule" id="PRU00543"/>
    </source>
</evidence>
<evidence type="ECO:0000255" key="4">
    <source>
        <dbReference type="PROSITE-ProRule" id="PRU00544"/>
    </source>
</evidence>
<evidence type="ECO:0000269" key="5">
    <source>
    </source>
</evidence>
<feature type="chain" id="PRO_0000148719" description="Trk system potassium uptake protein TrkA">
    <location>
        <begin position="1"/>
        <end position="458"/>
    </location>
</feature>
<feature type="domain" description="RCK N-terminal 1" evidence="3">
    <location>
        <begin position="1"/>
        <end position="123"/>
    </location>
</feature>
<feature type="domain" description="RCK C-terminal 1" evidence="4">
    <location>
        <begin position="143"/>
        <end position="227"/>
    </location>
</feature>
<feature type="domain" description="RCK N-terminal 2" evidence="3">
    <location>
        <begin position="232"/>
        <end position="348"/>
    </location>
</feature>
<feature type="domain" description="RCK C-terminal 2" evidence="4">
    <location>
        <begin position="368"/>
        <end position="453"/>
    </location>
</feature>
<feature type="binding site" description="in other chain" evidence="1">
    <location>
        <begin position="7"/>
        <end position="11"/>
    </location>
    <ligand>
        <name>NAD(+)</name>
        <dbReference type="ChEBI" id="CHEBI:57540"/>
        <label>1</label>
        <note>ligand shared between dimeric partners</note>
    </ligand>
</feature>
<feature type="binding site" description="in other chain" evidence="1">
    <location>
        <position position="30"/>
    </location>
    <ligand>
        <name>NAD(+)</name>
        <dbReference type="ChEBI" id="CHEBI:57540"/>
        <label>1</label>
        <note>ligand shared between dimeric partners</note>
    </ligand>
</feature>
<feature type="binding site" description="in other chain" evidence="1">
    <location>
        <begin position="73"/>
        <end position="74"/>
    </location>
    <ligand>
        <name>NAD(+)</name>
        <dbReference type="ChEBI" id="CHEBI:57540"/>
        <label>1</label>
        <note>ligand shared between dimeric partners</note>
    </ligand>
</feature>
<feature type="binding site" evidence="1">
    <location>
        <position position="98"/>
    </location>
    <ligand>
        <name>NAD(+)</name>
        <dbReference type="ChEBI" id="CHEBI:57540"/>
        <label>1</label>
        <note>ligand shared between dimeric partners</note>
    </ligand>
</feature>
<feature type="binding site" evidence="2">
    <location>
        <begin position="234"/>
        <end position="262"/>
    </location>
    <ligand>
        <name>NAD(+)</name>
        <dbReference type="ChEBI" id="CHEBI:57540"/>
        <label>2</label>
    </ligand>
</feature>
<gene>
    <name type="primary">trkA</name>
</gene>
<dbReference type="EMBL" id="D28477">
    <property type="protein sequence ID" value="BAA05838.1"/>
    <property type="molecule type" value="Genomic_DNA"/>
</dbReference>
<dbReference type="EMBL" id="D86411">
    <property type="protein sequence ID" value="BAA31228.1"/>
    <property type="molecule type" value="Genomic_DNA"/>
</dbReference>
<dbReference type="PIR" id="S50220">
    <property type="entry name" value="S50220"/>
</dbReference>
<dbReference type="SMR" id="P39448"/>
<dbReference type="STRING" id="663.BAU10_14925"/>
<dbReference type="eggNOG" id="COG0569">
    <property type="taxonomic scope" value="Bacteria"/>
</dbReference>
<dbReference type="GO" id="GO:0005886">
    <property type="term" value="C:plasma membrane"/>
    <property type="evidence" value="ECO:0007669"/>
    <property type="project" value="UniProtKB-SubCell"/>
</dbReference>
<dbReference type="GO" id="GO:0015079">
    <property type="term" value="F:potassium ion transmembrane transporter activity"/>
    <property type="evidence" value="ECO:0007669"/>
    <property type="project" value="InterPro"/>
</dbReference>
<dbReference type="FunFam" id="3.30.70.1450:FF:000001">
    <property type="entry name" value="Trk system potassium transporter TrkA"/>
    <property type="match status" value="1"/>
</dbReference>
<dbReference type="FunFam" id="3.30.70.1450:FF:000002">
    <property type="entry name" value="Trk system potassium transporter TrkA"/>
    <property type="match status" value="1"/>
</dbReference>
<dbReference type="FunFam" id="3.40.50.720:FF:000027">
    <property type="entry name" value="Trk system potassium transporter TrkA"/>
    <property type="match status" value="1"/>
</dbReference>
<dbReference type="FunFam" id="3.40.50.720:FF:000042">
    <property type="entry name" value="Trk system potassium transporter TrkA"/>
    <property type="match status" value="1"/>
</dbReference>
<dbReference type="Gene3D" id="3.40.50.720">
    <property type="entry name" value="NAD(P)-binding Rossmann-like Domain"/>
    <property type="match status" value="2"/>
</dbReference>
<dbReference type="Gene3D" id="3.30.70.1450">
    <property type="entry name" value="Regulator of K+ conductance, C-terminal domain"/>
    <property type="match status" value="2"/>
</dbReference>
<dbReference type="InterPro" id="IPR006036">
    <property type="entry name" value="K_uptake_TrkA"/>
</dbReference>
<dbReference type="InterPro" id="IPR036291">
    <property type="entry name" value="NAD(P)-bd_dom_sf"/>
</dbReference>
<dbReference type="InterPro" id="IPR006037">
    <property type="entry name" value="RCK_C"/>
</dbReference>
<dbReference type="InterPro" id="IPR036721">
    <property type="entry name" value="RCK_C_sf"/>
</dbReference>
<dbReference type="InterPro" id="IPR003148">
    <property type="entry name" value="RCK_N"/>
</dbReference>
<dbReference type="InterPro" id="IPR050721">
    <property type="entry name" value="Trk_Ktr_HKT_K-transport"/>
</dbReference>
<dbReference type="NCBIfam" id="NF007030">
    <property type="entry name" value="PRK09496.1-1"/>
    <property type="match status" value="1"/>
</dbReference>
<dbReference type="NCBIfam" id="NF007031">
    <property type="entry name" value="PRK09496.1-2"/>
    <property type="match status" value="1"/>
</dbReference>
<dbReference type="NCBIfam" id="NF007032">
    <property type="entry name" value="PRK09496.1-4"/>
    <property type="match status" value="1"/>
</dbReference>
<dbReference type="NCBIfam" id="NF007039">
    <property type="entry name" value="PRK09496.3-2"/>
    <property type="match status" value="1"/>
</dbReference>
<dbReference type="PANTHER" id="PTHR43833">
    <property type="entry name" value="POTASSIUM CHANNEL PROTEIN 2-RELATED-RELATED"/>
    <property type="match status" value="1"/>
</dbReference>
<dbReference type="PANTHER" id="PTHR43833:SF5">
    <property type="entry name" value="TRK SYSTEM POTASSIUM UPTAKE PROTEIN TRKA"/>
    <property type="match status" value="1"/>
</dbReference>
<dbReference type="Pfam" id="PF02080">
    <property type="entry name" value="TrkA_C"/>
    <property type="match status" value="2"/>
</dbReference>
<dbReference type="Pfam" id="PF02254">
    <property type="entry name" value="TrkA_N"/>
    <property type="match status" value="2"/>
</dbReference>
<dbReference type="PRINTS" id="PR00335">
    <property type="entry name" value="KUPTAKETRKA"/>
</dbReference>
<dbReference type="SUPFAM" id="SSF51735">
    <property type="entry name" value="NAD(P)-binding Rossmann-fold domains"/>
    <property type="match status" value="2"/>
</dbReference>
<dbReference type="SUPFAM" id="SSF116726">
    <property type="entry name" value="TrkA C-terminal domain-like"/>
    <property type="match status" value="2"/>
</dbReference>
<dbReference type="PROSITE" id="PS51202">
    <property type="entry name" value="RCK_C"/>
    <property type="match status" value="2"/>
</dbReference>
<dbReference type="PROSITE" id="PS51201">
    <property type="entry name" value="RCK_N"/>
    <property type="match status" value="2"/>
</dbReference>
<sequence>MKIIILGAGQVGGTLAENLVGENNDITIVDNNADRLRELQDKYDLRVVNGHASHPDVLHEAGAQDADMLVAVTNTDETNMAACQVAFTLFNTPNRVARIRSPEYLAEKEALFKSGAIPVDHLIAPEELVTSYIERLIQYPGALQVVSFAEQKVSLVAVKAYYGGPLVGNALSALREHMPHIDTRVAAIFRQGRPIRPQGTTIIEADDEVFFVAASNHIRSVMSELQRLEKPYRRIMIVGGGNIGASLAKRLEQNYSVKLIERNYQRAEKLSEELENTIVFCGDAADQELLSEENIDQVDVFIALTNEDETNIMSAMLAKRMGAKKVMVLIQRGAYVDLVQGGVIDVAISPQQATISALLTHVRRADIVNVSSLRRGAAEAIEAVAHGDESTSKVVGRAIGDIKLPPGTTIGAIVRGEEVLIAHDRTVIEQDDHVVMFLVNKKYVSDVEALFQPSPFFL</sequence>
<organism>
    <name type="scientific">Vibrio alginolyticus</name>
    <dbReference type="NCBI Taxonomy" id="663"/>
    <lineage>
        <taxon>Bacteria</taxon>
        <taxon>Pseudomonadati</taxon>
        <taxon>Pseudomonadota</taxon>
        <taxon>Gammaproteobacteria</taxon>
        <taxon>Vibrionales</taxon>
        <taxon>Vibrionaceae</taxon>
        <taxon>Vibrio</taxon>
    </lineage>
</organism>
<name>TRKA_VIBAL</name>